<comment type="cofactor">
    <cofactor evidence="1">
        <name>thiamine diphosphate</name>
        <dbReference type="ChEBI" id="CHEBI:58937"/>
    </cofactor>
</comment>
<comment type="similarity">
    <text evidence="1">Belongs to the XFP family.</text>
</comment>
<sequence>MSLETSTTTPAGSPLSDRELDLIDKYWRAANYLSVGQIYLLDNPLLKEPLSAEHVKPRLLGHWGTTPGLNLVYAHLNRIIRNRDADVIYVTGPGHGGPGLVANAYLEGTYSEVYTGIEEDAEGLRKLFRQFSFPGGIPSHVAAQTPGSIHEGGELGYALVHAYGAAFDNPYLVVACVIGDGEAETGPLAAGWHSNKFLNPVTDGAVLPILALNGYKIANPTVLARIPHTELEALLRGYGYRPITVAGDDPTDVHRQLAAALDEAFDGIAAIQGAARGGGEVQRPVWPMIVLRTPKGWTGPKVVDGKRVEGTWRSHQVPLAETHDNPEHRAQLEEWLRSYGPEQLFDDDGRLRAELRALAPTGDRRMSANPHANGGLLLHDLDLPDFRDYAVPVSRPGSVTHEATRVLGTFLRDVIARNKDRFRMMGPDETASNRLDAVYGATEKVWLSATEPDDEHLAPDGRVMEVLSEHLCQGWLEGYLLTGRHGLFNCYEAFVHIVDSMLNQHAKWLATSRELPWRRPIASLNYLLTSHVWRQDHNGASHQDPGFIDLVANKRAELTRVYLPPDGNTLLSVADHCLRSRDYINVIVAGKQPALAYLDMDAAIAHCTRGLGIWDWASTARSIGAEPDVVLACAGDIPTLETLAAADILRRELPDLAVRVVNVVDLMRLQPDSEHPHGLPDREFDALFTRDRPVIFAYHGYPWLIHRLTYRRANHAQLHVRGFKERGTTTTPFDMVMLNDLDRFHLVIDVLDRVEGLASRAAMLRQRMVDARLAARMYTREHGEDDPAIANWTWEPSERNSRSE</sequence>
<name>PHK_MYCPA</name>
<accession>Q73ZM8</accession>
<gene>
    <name type="ordered locus">MAP_1573c</name>
</gene>
<feature type="chain" id="PRO_0000193881" description="Probable phosphoketolase">
    <location>
        <begin position="1"/>
        <end position="804"/>
    </location>
</feature>
<evidence type="ECO:0000255" key="1">
    <source>
        <dbReference type="HAMAP-Rule" id="MF_01403"/>
    </source>
</evidence>
<dbReference type="EC" id="4.1.2.-" evidence="1"/>
<dbReference type="EMBL" id="AE016958">
    <property type="protein sequence ID" value="AAS03890.1"/>
    <property type="molecule type" value="Genomic_DNA"/>
</dbReference>
<dbReference type="RefSeq" id="WP_003876539.1">
    <property type="nucleotide sequence ID" value="NZ_CP106873.1"/>
</dbReference>
<dbReference type="SMR" id="Q73ZM8"/>
<dbReference type="STRING" id="262316.MAP_1573c"/>
<dbReference type="KEGG" id="mpa:MAP_1573c"/>
<dbReference type="eggNOG" id="COG3957">
    <property type="taxonomic scope" value="Bacteria"/>
</dbReference>
<dbReference type="HOGENOM" id="CLU_013954_2_0_11"/>
<dbReference type="Proteomes" id="UP000000580">
    <property type="component" value="Chromosome"/>
</dbReference>
<dbReference type="GO" id="GO:0016832">
    <property type="term" value="F:aldehyde-lyase activity"/>
    <property type="evidence" value="ECO:0007669"/>
    <property type="project" value="UniProtKB-UniRule"/>
</dbReference>
<dbReference type="GO" id="GO:0000287">
    <property type="term" value="F:magnesium ion binding"/>
    <property type="evidence" value="ECO:0007669"/>
    <property type="project" value="UniProtKB-ARBA"/>
</dbReference>
<dbReference type="GO" id="GO:0005975">
    <property type="term" value="P:carbohydrate metabolic process"/>
    <property type="evidence" value="ECO:0007669"/>
    <property type="project" value="InterPro"/>
</dbReference>
<dbReference type="CDD" id="cd02011">
    <property type="entry name" value="TPP_PK"/>
    <property type="match status" value="1"/>
</dbReference>
<dbReference type="FunFam" id="3.40.50.970:FF:000091">
    <property type="entry name" value="Xylulose-5-phosphate/fructose-6-phosphate phosphoketolase"/>
    <property type="match status" value="1"/>
</dbReference>
<dbReference type="Gene3D" id="3.40.50.920">
    <property type="match status" value="1"/>
</dbReference>
<dbReference type="Gene3D" id="3.40.50.970">
    <property type="match status" value="2"/>
</dbReference>
<dbReference type="HAMAP" id="MF_01403">
    <property type="entry name" value="Phosphoketolase"/>
    <property type="match status" value="1"/>
</dbReference>
<dbReference type="InterPro" id="IPR023962">
    <property type="entry name" value="Phosphoketolase"/>
</dbReference>
<dbReference type="InterPro" id="IPR029061">
    <property type="entry name" value="THDP-binding"/>
</dbReference>
<dbReference type="InterPro" id="IPR009014">
    <property type="entry name" value="Transketo_C/PFOR_II"/>
</dbReference>
<dbReference type="InterPro" id="IPR005593">
    <property type="entry name" value="Xul5P/Fru6P_PKetolase"/>
</dbReference>
<dbReference type="InterPro" id="IPR018969">
    <property type="entry name" value="Xul5P/Fru6P_PKetolase_C"/>
</dbReference>
<dbReference type="InterPro" id="IPR019790">
    <property type="entry name" value="Xul5P/Fru6P_PKetolase_CS"/>
</dbReference>
<dbReference type="InterPro" id="IPR018970">
    <property type="entry name" value="Xul5P/Fru6P_PKetolase_N"/>
</dbReference>
<dbReference type="InterPro" id="IPR019789">
    <property type="entry name" value="Xul5P/Fru6P_PKetolase_ThDP_BS"/>
</dbReference>
<dbReference type="NCBIfam" id="NF003617">
    <property type="entry name" value="PRK05261.1-2"/>
    <property type="match status" value="1"/>
</dbReference>
<dbReference type="NCBIfam" id="NF003619">
    <property type="entry name" value="PRK05261.1-4"/>
    <property type="match status" value="1"/>
</dbReference>
<dbReference type="NCBIfam" id="NF003621">
    <property type="entry name" value="PRK05261.1-6"/>
    <property type="match status" value="1"/>
</dbReference>
<dbReference type="PANTHER" id="PTHR31273">
    <property type="entry name" value="PHOSPHOKETOLASE-RELATED"/>
    <property type="match status" value="1"/>
</dbReference>
<dbReference type="PANTHER" id="PTHR31273:SF0">
    <property type="entry name" value="PHOSPHOKETOLASE-RELATED"/>
    <property type="match status" value="1"/>
</dbReference>
<dbReference type="Pfam" id="PF03894">
    <property type="entry name" value="XFP"/>
    <property type="match status" value="1"/>
</dbReference>
<dbReference type="Pfam" id="PF09363">
    <property type="entry name" value="XFP_C"/>
    <property type="match status" value="1"/>
</dbReference>
<dbReference type="Pfam" id="PF09364">
    <property type="entry name" value="XFP_N"/>
    <property type="match status" value="1"/>
</dbReference>
<dbReference type="PIRSF" id="PIRSF017245">
    <property type="entry name" value="Phosphoketolase"/>
    <property type="match status" value="1"/>
</dbReference>
<dbReference type="SUPFAM" id="SSF52518">
    <property type="entry name" value="Thiamin diphosphate-binding fold (THDP-binding)"/>
    <property type="match status" value="2"/>
</dbReference>
<dbReference type="PROSITE" id="PS60002">
    <property type="entry name" value="PHOSPHOKETOLASE_1"/>
    <property type="match status" value="1"/>
</dbReference>
<dbReference type="PROSITE" id="PS60003">
    <property type="entry name" value="PHOSPHOKETOLASE_2"/>
    <property type="match status" value="1"/>
</dbReference>
<organism>
    <name type="scientific">Mycolicibacterium paratuberculosis (strain ATCC BAA-968 / K-10)</name>
    <name type="common">Mycobacterium paratuberculosis</name>
    <dbReference type="NCBI Taxonomy" id="262316"/>
    <lineage>
        <taxon>Bacteria</taxon>
        <taxon>Bacillati</taxon>
        <taxon>Actinomycetota</taxon>
        <taxon>Actinomycetes</taxon>
        <taxon>Mycobacteriales</taxon>
        <taxon>Mycobacteriaceae</taxon>
        <taxon>Mycobacterium</taxon>
        <taxon>Mycobacterium avium complex (MAC)</taxon>
    </lineage>
</organism>
<reference key="1">
    <citation type="journal article" date="2005" name="Proc. Natl. Acad. Sci. U.S.A.">
        <title>The complete genome sequence of Mycobacterium avium subspecies paratuberculosis.</title>
        <authorList>
            <person name="Li L."/>
            <person name="Bannantine J.P."/>
            <person name="Zhang Q."/>
            <person name="Amonsin A."/>
            <person name="May B.J."/>
            <person name="Alt D."/>
            <person name="Banerji N."/>
            <person name="Kanjilal S."/>
            <person name="Kapur V."/>
        </authorList>
    </citation>
    <scope>NUCLEOTIDE SEQUENCE [LARGE SCALE GENOMIC DNA]</scope>
    <source>
        <strain>ATCC BAA-968 / K-10</strain>
    </source>
</reference>
<protein>
    <recommendedName>
        <fullName evidence="1">Probable phosphoketolase</fullName>
        <ecNumber evidence="1">4.1.2.-</ecNumber>
    </recommendedName>
</protein>
<keyword id="KW-0456">Lyase</keyword>
<keyword id="KW-1185">Reference proteome</keyword>
<keyword id="KW-0786">Thiamine pyrophosphate</keyword>
<proteinExistence type="inferred from homology"/>